<protein>
    <recommendedName>
        <fullName>Uncharacterized protein MG409 homolog</fullName>
    </recommendedName>
</protein>
<dbReference type="EMBL" id="U00089">
    <property type="protein sequence ID" value="AAB95882.1"/>
    <property type="molecule type" value="Genomic_DNA"/>
</dbReference>
<dbReference type="PIR" id="S73560">
    <property type="entry name" value="S73560"/>
</dbReference>
<dbReference type="RefSeq" id="NP_110297.1">
    <property type="nucleotide sequence ID" value="NC_000912.1"/>
</dbReference>
<dbReference type="SMR" id="P75187"/>
<dbReference type="STRING" id="272634.MPN_608"/>
<dbReference type="EnsemblBacteria" id="AAB95882">
    <property type="protein sequence ID" value="AAB95882"/>
    <property type="gene ID" value="MPN_608"/>
</dbReference>
<dbReference type="KEGG" id="mpn:MPN_608"/>
<dbReference type="PATRIC" id="fig|272634.6.peg.671"/>
<dbReference type="HOGENOM" id="CLU_107119_0_0_14"/>
<dbReference type="OrthoDB" id="9814256at2"/>
<dbReference type="BioCyc" id="MPNE272634:G1GJ3-983-MONOMER"/>
<dbReference type="Proteomes" id="UP000000808">
    <property type="component" value="Chromosome"/>
</dbReference>
<dbReference type="GO" id="GO:0030643">
    <property type="term" value="P:intracellular phosphate ion homeostasis"/>
    <property type="evidence" value="ECO:0007669"/>
    <property type="project" value="InterPro"/>
</dbReference>
<dbReference type="GO" id="GO:0045936">
    <property type="term" value="P:negative regulation of phosphate metabolic process"/>
    <property type="evidence" value="ECO:0007669"/>
    <property type="project" value="InterPro"/>
</dbReference>
<dbReference type="Gene3D" id="1.20.58.220">
    <property type="entry name" value="Phosphate transport system protein phou homolog 2, domain 2"/>
    <property type="match status" value="1"/>
</dbReference>
<dbReference type="InterPro" id="IPR028366">
    <property type="entry name" value="P_transport_PhoU"/>
</dbReference>
<dbReference type="InterPro" id="IPR038078">
    <property type="entry name" value="PhoU-like_sf"/>
</dbReference>
<dbReference type="InterPro" id="IPR026022">
    <property type="entry name" value="PhoU_dom"/>
</dbReference>
<dbReference type="NCBIfam" id="TIGR02135">
    <property type="entry name" value="phoU_full"/>
    <property type="match status" value="1"/>
</dbReference>
<dbReference type="PANTHER" id="PTHR42930">
    <property type="entry name" value="PHOSPHATE-SPECIFIC TRANSPORT SYSTEM ACCESSORY PROTEIN PHOU"/>
    <property type="match status" value="1"/>
</dbReference>
<dbReference type="PANTHER" id="PTHR42930:SF3">
    <property type="entry name" value="PHOSPHATE-SPECIFIC TRANSPORT SYSTEM ACCESSORY PROTEIN PHOU"/>
    <property type="match status" value="1"/>
</dbReference>
<dbReference type="Pfam" id="PF01895">
    <property type="entry name" value="PhoU"/>
    <property type="match status" value="2"/>
</dbReference>
<dbReference type="SUPFAM" id="SSF109755">
    <property type="entry name" value="PhoU-like"/>
    <property type="match status" value="1"/>
</dbReference>
<sequence>MESINYQILKRSEKKLLGLFFDYFQHVIKMHETLNKLLCEADVTKREKLIQAIYEMEDFSNKSEFKLINESIWAISKNSPLTNHLRLTITIIMCSRDLERICDYANNLTKFVKHYQHLDVSIFSKLVNLHKSVLNNLKQTFASLQDKEKPLTIQFENVTKILTEFEQQYRVVLTEYYDKVKDEKLSDRIFLIDLILSVKHIERINDYCYNIIKAFLFVKNPEVFN</sequence>
<keyword id="KW-1185">Reference proteome</keyword>
<proteinExistence type="predicted"/>
<feature type="chain" id="PRO_0000210597" description="Uncharacterized protein MG409 homolog">
    <location>
        <begin position="1"/>
        <end position="225"/>
    </location>
</feature>
<gene>
    <name type="ordered locus">MPN_608</name>
    <name type="ORF">C12_orf225</name>
    <name type="ORF">MP234</name>
</gene>
<name>Y608_MYCPN</name>
<reference key="1">
    <citation type="journal article" date="1996" name="Nucleic Acids Res.">
        <title>Complete sequence analysis of the genome of the bacterium Mycoplasma pneumoniae.</title>
        <authorList>
            <person name="Himmelreich R."/>
            <person name="Hilbert H."/>
            <person name="Plagens H."/>
            <person name="Pirkl E."/>
            <person name="Li B.-C."/>
            <person name="Herrmann R."/>
        </authorList>
    </citation>
    <scope>NUCLEOTIDE SEQUENCE [LARGE SCALE GENOMIC DNA]</scope>
    <source>
        <strain>ATCC 29342 / M129 / Subtype 1</strain>
    </source>
</reference>
<accession>P75187</accession>
<organism>
    <name type="scientific">Mycoplasma pneumoniae (strain ATCC 29342 / M129 / Subtype 1)</name>
    <name type="common">Mycoplasmoides pneumoniae</name>
    <dbReference type="NCBI Taxonomy" id="272634"/>
    <lineage>
        <taxon>Bacteria</taxon>
        <taxon>Bacillati</taxon>
        <taxon>Mycoplasmatota</taxon>
        <taxon>Mycoplasmoidales</taxon>
        <taxon>Mycoplasmoidaceae</taxon>
        <taxon>Mycoplasmoides</taxon>
    </lineage>
</organism>